<reference key="1">
    <citation type="journal article" date="2007" name="Science">
        <title>Legumes symbioses: absence of nod genes in photosynthetic bradyrhizobia.</title>
        <authorList>
            <person name="Giraud E."/>
            <person name="Moulin L."/>
            <person name="Vallenet D."/>
            <person name="Barbe V."/>
            <person name="Cytryn E."/>
            <person name="Avarre J.-C."/>
            <person name="Jaubert M."/>
            <person name="Simon D."/>
            <person name="Cartieaux F."/>
            <person name="Prin Y."/>
            <person name="Bena G."/>
            <person name="Hannibal L."/>
            <person name="Fardoux J."/>
            <person name="Kojadinovic M."/>
            <person name="Vuillet L."/>
            <person name="Lajus A."/>
            <person name="Cruveiller S."/>
            <person name="Rouy Z."/>
            <person name="Mangenot S."/>
            <person name="Segurens B."/>
            <person name="Dossat C."/>
            <person name="Franck W.L."/>
            <person name="Chang W.-S."/>
            <person name="Saunders E."/>
            <person name="Bruce D."/>
            <person name="Richardson P."/>
            <person name="Normand P."/>
            <person name="Dreyfus B."/>
            <person name="Pignol D."/>
            <person name="Stacey G."/>
            <person name="Emerich D."/>
            <person name="Vermeglio A."/>
            <person name="Medigue C."/>
            <person name="Sadowsky M."/>
        </authorList>
    </citation>
    <scope>NUCLEOTIDE SEQUENCE [LARGE SCALE GENOMIC DNA]</scope>
    <source>
        <strain>ORS 278</strain>
    </source>
</reference>
<dbReference type="EC" id="2.7.2.8" evidence="1"/>
<dbReference type="EMBL" id="CU234118">
    <property type="protein sequence ID" value="CAL74703.1"/>
    <property type="molecule type" value="Genomic_DNA"/>
</dbReference>
<dbReference type="RefSeq" id="WP_011923958.1">
    <property type="nucleotide sequence ID" value="NC_009445.1"/>
</dbReference>
<dbReference type="SMR" id="A4YLC7"/>
<dbReference type="STRING" id="114615.BRADO0779"/>
<dbReference type="KEGG" id="bra:BRADO0779"/>
<dbReference type="eggNOG" id="COG0548">
    <property type="taxonomic scope" value="Bacteria"/>
</dbReference>
<dbReference type="HOGENOM" id="CLU_053680_0_0_5"/>
<dbReference type="OrthoDB" id="9803155at2"/>
<dbReference type="UniPathway" id="UPA00068">
    <property type="reaction ID" value="UER00107"/>
</dbReference>
<dbReference type="Proteomes" id="UP000001994">
    <property type="component" value="Chromosome"/>
</dbReference>
<dbReference type="GO" id="GO:0005737">
    <property type="term" value="C:cytoplasm"/>
    <property type="evidence" value="ECO:0007669"/>
    <property type="project" value="UniProtKB-SubCell"/>
</dbReference>
<dbReference type="GO" id="GO:0003991">
    <property type="term" value="F:acetylglutamate kinase activity"/>
    <property type="evidence" value="ECO:0007669"/>
    <property type="project" value="UniProtKB-UniRule"/>
</dbReference>
<dbReference type="GO" id="GO:0005524">
    <property type="term" value="F:ATP binding"/>
    <property type="evidence" value="ECO:0007669"/>
    <property type="project" value="UniProtKB-UniRule"/>
</dbReference>
<dbReference type="GO" id="GO:0042450">
    <property type="term" value="P:arginine biosynthetic process via ornithine"/>
    <property type="evidence" value="ECO:0007669"/>
    <property type="project" value="UniProtKB-UniRule"/>
</dbReference>
<dbReference type="GO" id="GO:0006526">
    <property type="term" value="P:L-arginine biosynthetic process"/>
    <property type="evidence" value="ECO:0007669"/>
    <property type="project" value="UniProtKB-UniPathway"/>
</dbReference>
<dbReference type="CDD" id="cd04250">
    <property type="entry name" value="AAK_NAGK-C"/>
    <property type="match status" value="1"/>
</dbReference>
<dbReference type="FunFam" id="3.40.1160.10:FF:000004">
    <property type="entry name" value="Acetylglutamate kinase"/>
    <property type="match status" value="1"/>
</dbReference>
<dbReference type="Gene3D" id="3.40.1160.10">
    <property type="entry name" value="Acetylglutamate kinase-like"/>
    <property type="match status" value="1"/>
</dbReference>
<dbReference type="HAMAP" id="MF_00082">
    <property type="entry name" value="ArgB"/>
    <property type="match status" value="1"/>
</dbReference>
<dbReference type="InterPro" id="IPR036393">
    <property type="entry name" value="AceGlu_kinase-like_sf"/>
</dbReference>
<dbReference type="InterPro" id="IPR004662">
    <property type="entry name" value="AcgluKinase_fam"/>
</dbReference>
<dbReference type="InterPro" id="IPR037528">
    <property type="entry name" value="ArgB"/>
</dbReference>
<dbReference type="InterPro" id="IPR001048">
    <property type="entry name" value="Asp/Glu/Uridylate_kinase"/>
</dbReference>
<dbReference type="InterPro" id="IPR041727">
    <property type="entry name" value="NAGK-C"/>
</dbReference>
<dbReference type="NCBIfam" id="TIGR00761">
    <property type="entry name" value="argB"/>
    <property type="match status" value="1"/>
</dbReference>
<dbReference type="PANTHER" id="PTHR23342">
    <property type="entry name" value="N-ACETYLGLUTAMATE SYNTHASE"/>
    <property type="match status" value="1"/>
</dbReference>
<dbReference type="PANTHER" id="PTHR23342:SF0">
    <property type="entry name" value="N-ACETYLGLUTAMATE SYNTHASE, MITOCHONDRIAL"/>
    <property type="match status" value="1"/>
</dbReference>
<dbReference type="Pfam" id="PF00696">
    <property type="entry name" value="AA_kinase"/>
    <property type="match status" value="1"/>
</dbReference>
<dbReference type="PIRSF" id="PIRSF000728">
    <property type="entry name" value="NAGK"/>
    <property type="match status" value="1"/>
</dbReference>
<dbReference type="SUPFAM" id="SSF53633">
    <property type="entry name" value="Carbamate kinase-like"/>
    <property type="match status" value="1"/>
</dbReference>
<keyword id="KW-0028">Amino-acid biosynthesis</keyword>
<keyword id="KW-0055">Arginine biosynthesis</keyword>
<keyword id="KW-0067">ATP-binding</keyword>
<keyword id="KW-0963">Cytoplasm</keyword>
<keyword id="KW-0418">Kinase</keyword>
<keyword id="KW-0547">Nucleotide-binding</keyword>
<keyword id="KW-1185">Reference proteome</keyword>
<keyword id="KW-0808">Transferase</keyword>
<accession>A4YLC7</accession>
<evidence type="ECO:0000255" key="1">
    <source>
        <dbReference type="HAMAP-Rule" id="MF_00082"/>
    </source>
</evidence>
<gene>
    <name evidence="1" type="primary">argB</name>
    <name type="ordered locus">BRADO0779</name>
</gene>
<protein>
    <recommendedName>
        <fullName evidence="1">Acetylglutamate kinase</fullName>
        <ecNumber evidence="1">2.7.2.8</ecNumber>
    </recommendedName>
    <alternativeName>
        <fullName evidence="1">N-acetyl-L-glutamate 5-phosphotransferase</fullName>
    </alternativeName>
    <alternativeName>
        <fullName evidence="1">NAG kinase</fullName>
        <shortName evidence="1">NAGK</shortName>
    </alternativeName>
</protein>
<sequence>MTDATTISPLDQARILSEALPHMQEYDDETIVIKYGGHAMGDEDTAKAFARDIVLLEQTAINPVVVHGGGPQIATMLKRLGIVSEFAAGLRITDAATIEIVEMVLAGSINKQLVGYINEAGGKAVGLCGKDGNMVRAVKATRTMVDPDSHIEKVVDLGFVGEPDKVDLTLLNQLIGYELIPVLAPLATSKEGQTFNVNADTFAGAVAGALKAKRLLLLTDVPGVLDKSKKLIPEISIKDARKLIADGTISGGMIPKVETCIYALEQGVQGVVILDGKVPHAVLLELFTNQGTGTLIHK</sequence>
<proteinExistence type="inferred from homology"/>
<comment type="function">
    <text evidence="1">Catalyzes the ATP-dependent phosphorylation of N-acetyl-L-glutamate.</text>
</comment>
<comment type="catalytic activity">
    <reaction evidence="1">
        <text>N-acetyl-L-glutamate + ATP = N-acetyl-L-glutamyl 5-phosphate + ADP</text>
        <dbReference type="Rhea" id="RHEA:14629"/>
        <dbReference type="ChEBI" id="CHEBI:30616"/>
        <dbReference type="ChEBI" id="CHEBI:44337"/>
        <dbReference type="ChEBI" id="CHEBI:57936"/>
        <dbReference type="ChEBI" id="CHEBI:456216"/>
        <dbReference type="EC" id="2.7.2.8"/>
    </reaction>
</comment>
<comment type="pathway">
    <text evidence="1">Amino-acid biosynthesis; L-arginine biosynthesis; N(2)-acetyl-L-ornithine from L-glutamate: step 2/4.</text>
</comment>
<comment type="subcellular location">
    <subcellularLocation>
        <location evidence="1">Cytoplasm</location>
    </subcellularLocation>
</comment>
<comment type="similarity">
    <text evidence="1">Belongs to the acetylglutamate kinase family. ArgB subfamily.</text>
</comment>
<name>ARGB_BRASO</name>
<feature type="chain" id="PRO_1000010487" description="Acetylglutamate kinase">
    <location>
        <begin position="1"/>
        <end position="298"/>
    </location>
</feature>
<feature type="binding site" evidence="1">
    <location>
        <begin position="69"/>
        <end position="70"/>
    </location>
    <ligand>
        <name>substrate</name>
    </ligand>
</feature>
<feature type="binding site" evidence="1">
    <location>
        <position position="91"/>
    </location>
    <ligand>
        <name>substrate</name>
    </ligand>
</feature>
<feature type="binding site" evidence="1">
    <location>
        <position position="196"/>
    </location>
    <ligand>
        <name>substrate</name>
    </ligand>
</feature>
<feature type="site" description="Transition state stabilizer" evidence="1">
    <location>
        <position position="34"/>
    </location>
</feature>
<feature type="site" description="Transition state stabilizer" evidence="1">
    <location>
        <position position="256"/>
    </location>
</feature>
<organism>
    <name type="scientific">Bradyrhizobium sp. (strain ORS 278)</name>
    <dbReference type="NCBI Taxonomy" id="114615"/>
    <lineage>
        <taxon>Bacteria</taxon>
        <taxon>Pseudomonadati</taxon>
        <taxon>Pseudomonadota</taxon>
        <taxon>Alphaproteobacteria</taxon>
        <taxon>Hyphomicrobiales</taxon>
        <taxon>Nitrobacteraceae</taxon>
        <taxon>Bradyrhizobium</taxon>
    </lineage>
</organism>